<evidence type="ECO:0000255" key="1">
    <source>
        <dbReference type="HAMAP-Rule" id="MF_01363"/>
    </source>
</evidence>
<evidence type="ECO:0000305" key="2"/>
<keyword id="KW-1185">Reference proteome</keyword>
<keyword id="KW-0687">Ribonucleoprotein</keyword>
<keyword id="KW-0689">Ribosomal protein</keyword>
<keyword id="KW-0694">RNA-binding</keyword>
<keyword id="KW-0699">rRNA-binding</keyword>
<reference key="1">
    <citation type="journal article" date="2010" name="Stand. Genomic Sci.">
        <title>Complete genome sequence of Rhizobium leguminosarum bv trifolii strain WSM2304, an effective microsymbiont of the South American clover Trifolium polymorphum.</title>
        <authorList>
            <person name="Reeve W."/>
            <person name="O'Hara G."/>
            <person name="Chain P."/>
            <person name="Ardley J."/>
            <person name="Brau L."/>
            <person name="Nandesena K."/>
            <person name="Tiwari R."/>
            <person name="Malfatti S."/>
            <person name="Kiss H."/>
            <person name="Lapidus A."/>
            <person name="Copeland A."/>
            <person name="Nolan M."/>
            <person name="Land M."/>
            <person name="Ivanova N."/>
            <person name="Mavromatis K."/>
            <person name="Markowitz V."/>
            <person name="Kyrpides N."/>
            <person name="Melino V."/>
            <person name="Denton M."/>
            <person name="Yates R."/>
            <person name="Howieson J."/>
        </authorList>
    </citation>
    <scope>NUCLEOTIDE SEQUENCE [LARGE SCALE GENOMIC DNA]</scope>
    <source>
        <strain>WSM2304</strain>
    </source>
</reference>
<proteinExistence type="inferred from homology"/>
<organism>
    <name type="scientific">Rhizobium leguminosarum bv. trifolii (strain WSM2304)</name>
    <dbReference type="NCBI Taxonomy" id="395492"/>
    <lineage>
        <taxon>Bacteria</taxon>
        <taxon>Pseudomonadati</taxon>
        <taxon>Pseudomonadota</taxon>
        <taxon>Alphaproteobacteria</taxon>
        <taxon>Hyphomicrobiales</taxon>
        <taxon>Rhizobiaceae</taxon>
        <taxon>Rhizobium/Agrobacterium group</taxon>
        <taxon>Rhizobium</taxon>
    </lineage>
</organism>
<comment type="function">
    <text evidence="1">This protein binds to 23S rRNA in the presence of protein L20.</text>
</comment>
<comment type="subunit">
    <text evidence="1">Part of the 50S ribosomal subunit. Contacts protein L20.</text>
</comment>
<comment type="similarity">
    <text evidence="1">Belongs to the bacterial ribosomal protein bL21 family.</text>
</comment>
<feature type="chain" id="PRO_1000143840" description="Large ribosomal subunit protein bL21">
    <location>
        <begin position="1"/>
        <end position="105"/>
    </location>
</feature>
<sequence>MFAVIKTGGKQYRVAANDVLTIEKLEATAGDSIEFTEVLVIGEGADAAIGAPFVTGASVKAEVVEQNRGKKVIAFKKRRRQNSKRSRGHRQHHTVVRITDIVAAK</sequence>
<name>RL21_RHILW</name>
<protein>
    <recommendedName>
        <fullName evidence="1">Large ribosomal subunit protein bL21</fullName>
    </recommendedName>
    <alternativeName>
        <fullName evidence="2">50S ribosomal protein L21</fullName>
    </alternativeName>
</protein>
<dbReference type="EMBL" id="CP001191">
    <property type="protein sequence ID" value="ACI57131.1"/>
    <property type="molecule type" value="Genomic_DNA"/>
</dbReference>
<dbReference type="RefSeq" id="WP_003543907.1">
    <property type="nucleotide sequence ID" value="NC_011369.1"/>
</dbReference>
<dbReference type="SMR" id="B5ZUD8"/>
<dbReference type="STRING" id="395492.Rleg2_3869"/>
<dbReference type="GeneID" id="84672329"/>
<dbReference type="KEGG" id="rlt:Rleg2_3869"/>
<dbReference type="eggNOG" id="COG0261">
    <property type="taxonomic scope" value="Bacteria"/>
</dbReference>
<dbReference type="HOGENOM" id="CLU_061463_3_2_5"/>
<dbReference type="Proteomes" id="UP000008330">
    <property type="component" value="Chromosome"/>
</dbReference>
<dbReference type="GO" id="GO:0005737">
    <property type="term" value="C:cytoplasm"/>
    <property type="evidence" value="ECO:0007669"/>
    <property type="project" value="UniProtKB-ARBA"/>
</dbReference>
<dbReference type="GO" id="GO:1990904">
    <property type="term" value="C:ribonucleoprotein complex"/>
    <property type="evidence" value="ECO:0007669"/>
    <property type="project" value="UniProtKB-KW"/>
</dbReference>
<dbReference type="GO" id="GO:0005840">
    <property type="term" value="C:ribosome"/>
    <property type="evidence" value="ECO:0007669"/>
    <property type="project" value="UniProtKB-KW"/>
</dbReference>
<dbReference type="GO" id="GO:0019843">
    <property type="term" value="F:rRNA binding"/>
    <property type="evidence" value="ECO:0007669"/>
    <property type="project" value="UniProtKB-UniRule"/>
</dbReference>
<dbReference type="GO" id="GO:0003735">
    <property type="term" value="F:structural constituent of ribosome"/>
    <property type="evidence" value="ECO:0007669"/>
    <property type="project" value="InterPro"/>
</dbReference>
<dbReference type="GO" id="GO:0006412">
    <property type="term" value="P:translation"/>
    <property type="evidence" value="ECO:0007669"/>
    <property type="project" value="UniProtKB-UniRule"/>
</dbReference>
<dbReference type="HAMAP" id="MF_01363">
    <property type="entry name" value="Ribosomal_bL21"/>
    <property type="match status" value="1"/>
</dbReference>
<dbReference type="InterPro" id="IPR028909">
    <property type="entry name" value="bL21-like"/>
</dbReference>
<dbReference type="InterPro" id="IPR036164">
    <property type="entry name" value="bL21-like_sf"/>
</dbReference>
<dbReference type="InterPro" id="IPR001787">
    <property type="entry name" value="Ribosomal_bL21"/>
</dbReference>
<dbReference type="NCBIfam" id="TIGR00061">
    <property type="entry name" value="L21"/>
    <property type="match status" value="1"/>
</dbReference>
<dbReference type="PANTHER" id="PTHR21349">
    <property type="entry name" value="50S RIBOSOMAL PROTEIN L21"/>
    <property type="match status" value="1"/>
</dbReference>
<dbReference type="PANTHER" id="PTHR21349:SF0">
    <property type="entry name" value="LARGE RIBOSOMAL SUBUNIT PROTEIN BL21M"/>
    <property type="match status" value="1"/>
</dbReference>
<dbReference type="Pfam" id="PF00829">
    <property type="entry name" value="Ribosomal_L21p"/>
    <property type="match status" value="1"/>
</dbReference>
<dbReference type="SUPFAM" id="SSF141091">
    <property type="entry name" value="L21p-like"/>
    <property type="match status" value="1"/>
</dbReference>
<gene>
    <name evidence="1" type="primary">rplU</name>
    <name type="ordered locus">Rleg2_3869</name>
</gene>
<accession>B5ZUD8</accession>